<keyword id="KW-0046">Antibiotic resistance</keyword>
<keyword id="KW-0441">Lipid A biosynthesis</keyword>
<keyword id="KW-0444">Lipid biosynthesis</keyword>
<keyword id="KW-0443">Lipid metabolism</keyword>
<keyword id="KW-0448">Lipopolysaccharide biosynthesis</keyword>
<keyword id="KW-0511">Multifunctional enzyme</keyword>
<keyword id="KW-0520">NAD</keyword>
<keyword id="KW-0560">Oxidoreductase</keyword>
<keyword id="KW-0808">Transferase</keyword>
<proteinExistence type="inferred from homology"/>
<dbReference type="EC" id="2.1.2.13" evidence="1"/>
<dbReference type="EC" id="1.1.1.305" evidence="1"/>
<dbReference type="EMBL" id="CU928163">
    <property type="protein sequence ID" value="CAR13779.1"/>
    <property type="molecule type" value="Genomic_DNA"/>
</dbReference>
<dbReference type="RefSeq" id="WP_000860278.1">
    <property type="nucleotide sequence ID" value="NC_011751.1"/>
</dbReference>
<dbReference type="RefSeq" id="YP_002413307.1">
    <property type="nucleotide sequence ID" value="NC_011751.1"/>
</dbReference>
<dbReference type="SMR" id="B7N5M0"/>
<dbReference type="STRING" id="585056.ECUMN_2596"/>
<dbReference type="KEGG" id="eum:ECUMN_2596"/>
<dbReference type="PATRIC" id="fig|585056.7.peg.2777"/>
<dbReference type="HOGENOM" id="CLU_007383_23_2_6"/>
<dbReference type="UniPathway" id="UPA00030"/>
<dbReference type="UniPathway" id="UPA00032">
    <property type="reaction ID" value="UER00492"/>
</dbReference>
<dbReference type="UniPathway" id="UPA00032">
    <property type="reaction ID" value="UER00494"/>
</dbReference>
<dbReference type="Proteomes" id="UP000007097">
    <property type="component" value="Chromosome"/>
</dbReference>
<dbReference type="GO" id="GO:0016020">
    <property type="term" value="C:membrane"/>
    <property type="evidence" value="ECO:0007669"/>
    <property type="project" value="GOC"/>
</dbReference>
<dbReference type="GO" id="GO:0016831">
    <property type="term" value="F:carboxy-lyase activity"/>
    <property type="evidence" value="ECO:0007669"/>
    <property type="project" value="InterPro"/>
</dbReference>
<dbReference type="GO" id="GO:0099619">
    <property type="term" value="F:UDP-4-amino-4-deoxy-L-arabinose formyltransferase activity"/>
    <property type="evidence" value="ECO:0007669"/>
    <property type="project" value="UniProtKB-EC"/>
</dbReference>
<dbReference type="GO" id="GO:0099618">
    <property type="term" value="F:UDP-glucuronate dehydrogenase activity"/>
    <property type="evidence" value="ECO:0007669"/>
    <property type="project" value="UniProtKB-EC"/>
</dbReference>
<dbReference type="GO" id="GO:0009245">
    <property type="term" value="P:lipid A biosynthetic process"/>
    <property type="evidence" value="ECO:0007669"/>
    <property type="project" value="UniProtKB-KW"/>
</dbReference>
<dbReference type="GO" id="GO:0009103">
    <property type="term" value="P:lipopolysaccharide biosynthetic process"/>
    <property type="evidence" value="ECO:0007669"/>
    <property type="project" value="UniProtKB-UniRule"/>
</dbReference>
<dbReference type="GO" id="GO:0046677">
    <property type="term" value="P:response to antibiotic"/>
    <property type="evidence" value="ECO:0007669"/>
    <property type="project" value="UniProtKB-KW"/>
</dbReference>
<dbReference type="CDD" id="cd08702">
    <property type="entry name" value="Arna_FMT_C"/>
    <property type="match status" value="1"/>
</dbReference>
<dbReference type="CDD" id="cd05257">
    <property type="entry name" value="Arna_like_SDR_e"/>
    <property type="match status" value="1"/>
</dbReference>
<dbReference type="CDD" id="cd08644">
    <property type="entry name" value="FMT_core_ArnA_N"/>
    <property type="match status" value="1"/>
</dbReference>
<dbReference type="FunFam" id="3.40.50.12230:FF:000002">
    <property type="entry name" value="Bifunctional polymyxin resistance protein ArnA"/>
    <property type="match status" value="1"/>
</dbReference>
<dbReference type="FunFam" id="3.40.50.720:FF:000197">
    <property type="entry name" value="Bifunctional polymyxin resistance protein ArnA"/>
    <property type="match status" value="1"/>
</dbReference>
<dbReference type="Gene3D" id="3.40.50.12230">
    <property type="match status" value="1"/>
</dbReference>
<dbReference type="Gene3D" id="3.40.50.720">
    <property type="entry name" value="NAD(P)-binding Rossmann-like Domain"/>
    <property type="match status" value="1"/>
</dbReference>
<dbReference type="HAMAP" id="MF_01166">
    <property type="entry name" value="ArnA"/>
    <property type="match status" value="1"/>
</dbReference>
<dbReference type="InterPro" id="IPR045869">
    <property type="entry name" value="Arna-like_SDR_e"/>
</dbReference>
<dbReference type="InterPro" id="IPR021168">
    <property type="entry name" value="Bifun_polymyxin_resist_ArnA"/>
</dbReference>
<dbReference type="InterPro" id="IPR001509">
    <property type="entry name" value="Epimerase_deHydtase"/>
</dbReference>
<dbReference type="InterPro" id="IPR005793">
    <property type="entry name" value="Formyl_trans_C"/>
</dbReference>
<dbReference type="InterPro" id="IPR002376">
    <property type="entry name" value="Formyl_transf_N"/>
</dbReference>
<dbReference type="InterPro" id="IPR036477">
    <property type="entry name" value="Formyl_transf_N_sf"/>
</dbReference>
<dbReference type="InterPro" id="IPR011034">
    <property type="entry name" value="Formyl_transferase-like_C_sf"/>
</dbReference>
<dbReference type="InterPro" id="IPR050177">
    <property type="entry name" value="Lipid_A_modif_metabolic_enz"/>
</dbReference>
<dbReference type="InterPro" id="IPR036291">
    <property type="entry name" value="NAD(P)-bd_dom_sf"/>
</dbReference>
<dbReference type="NCBIfam" id="NF005414">
    <property type="entry name" value="PRK06988.1"/>
    <property type="match status" value="1"/>
</dbReference>
<dbReference type="NCBIfam" id="NF005998">
    <property type="entry name" value="PRK08125.1"/>
    <property type="match status" value="1"/>
</dbReference>
<dbReference type="NCBIfam" id="NF008872">
    <property type="entry name" value="PRK11908.1"/>
    <property type="match status" value="1"/>
</dbReference>
<dbReference type="PANTHER" id="PTHR43245">
    <property type="entry name" value="BIFUNCTIONAL POLYMYXIN RESISTANCE PROTEIN ARNA"/>
    <property type="match status" value="1"/>
</dbReference>
<dbReference type="PANTHER" id="PTHR43245:SF13">
    <property type="entry name" value="UDP-D-APIOSE_UDP-D-XYLOSE SYNTHASE 2"/>
    <property type="match status" value="1"/>
</dbReference>
<dbReference type="Pfam" id="PF01370">
    <property type="entry name" value="Epimerase"/>
    <property type="match status" value="1"/>
</dbReference>
<dbReference type="Pfam" id="PF02911">
    <property type="entry name" value="Formyl_trans_C"/>
    <property type="match status" value="1"/>
</dbReference>
<dbReference type="Pfam" id="PF00551">
    <property type="entry name" value="Formyl_trans_N"/>
    <property type="match status" value="1"/>
</dbReference>
<dbReference type="PIRSF" id="PIRSF036506">
    <property type="entry name" value="Bifun_polymyxin_resist_ArnA"/>
    <property type="match status" value="1"/>
</dbReference>
<dbReference type="SUPFAM" id="SSF50486">
    <property type="entry name" value="FMT C-terminal domain-like"/>
    <property type="match status" value="1"/>
</dbReference>
<dbReference type="SUPFAM" id="SSF53328">
    <property type="entry name" value="Formyltransferase"/>
    <property type="match status" value="1"/>
</dbReference>
<dbReference type="SUPFAM" id="SSF51735">
    <property type="entry name" value="NAD(P)-binding Rossmann-fold domains"/>
    <property type="match status" value="1"/>
</dbReference>
<name>ARNA_ECOLU</name>
<evidence type="ECO:0000255" key="1">
    <source>
        <dbReference type="HAMAP-Rule" id="MF_01166"/>
    </source>
</evidence>
<accession>B7N5M0</accession>
<feature type="chain" id="PRO_1000137938" description="Bifunctional polymyxin resistance protein ArnA">
    <location>
        <begin position="1"/>
        <end position="660"/>
    </location>
</feature>
<feature type="region of interest" description="Formyltransferase ArnAFT">
    <location>
        <begin position="1"/>
        <end position="304"/>
    </location>
</feature>
<feature type="region of interest" description="Dehydrogenase ArnADH">
    <location>
        <begin position="314"/>
        <end position="660"/>
    </location>
</feature>
<feature type="active site" description="Proton donor; for formyltransferase activity" evidence="1">
    <location>
        <position position="104"/>
    </location>
</feature>
<feature type="active site" description="Proton acceptor; for decarboxylase activity" evidence="1">
    <location>
        <position position="434"/>
    </location>
</feature>
<feature type="active site" description="Proton donor; for decarboxylase activity" evidence="1">
    <location>
        <position position="619"/>
    </location>
</feature>
<feature type="binding site" evidence="1">
    <location>
        <begin position="86"/>
        <end position="88"/>
    </location>
    <ligand>
        <name>(6R)-10-formyltetrahydrofolate</name>
        <dbReference type="ChEBI" id="CHEBI:195366"/>
    </ligand>
</feature>
<feature type="binding site" evidence="1">
    <location>
        <position position="114"/>
    </location>
    <ligand>
        <name>(6R)-10-formyltetrahydrofolate</name>
        <dbReference type="ChEBI" id="CHEBI:195366"/>
    </ligand>
</feature>
<feature type="binding site" evidence="1">
    <location>
        <begin position="136"/>
        <end position="140"/>
    </location>
    <ligand>
        <name>(6R)-10-formyltetrahydrofolate</name>
        <dbReference type="ChEBI" id="CHEBI:195366"/>
    </ligand>
</feature>
<feature type="binding site" evidence="1">
    <location>
        <position position="347"/>
    </location>
    <ligand>
        <name>NAD(+)</name>
        <dbReference type="ChEBI" id="CHEBI:57540"/>
    </ligand>
</feature>
<feature type="binding site" evidence="1">
    <location>
        <begin position="368"/>
        <end position="369"/>
    </location>
    <ligand>
        <name>NAD(+)</name>
        <dbReference type="ChEBI" id="CHEBI:57540"/>
    </ligand>
</feature>
<feature type="binding site" evidence="1">
    <location>
        <position position="393"/>
    </location>
    <ligand>
        <name>UDP-alpha-D-glucuronate</name>
        <dbReference type="ChEBI" id="CHEBI:58052"/>
    </ligand>
</feature>
<feature type="binding site" evidence="1">
    <location>
        <position position="398"/>
    </location>
    <ligand>
        <name>UDP-alpha-D-glucuronate</name>
        <dbReference type="ChEBI" id="CHEBI:58052"/>
    </ligand>
</feature>
<feature type="binding site" evidence="1">
    <location>
        <begin position="432"/>
        <end position="433"/>
    </location>
    <ligand>
        <name>UDP-alpha-D-glucuronate</name>
        <dbReference type="ChEBI" id="CHEBI:58052"/>
    </ligand>
</feature>
<feature type="binding site" evidence="1">
    <location>
        <position position="460"/>
    </location>
    <ligand>
        <name>UDP-alpha-D-glucuronate</name>
        <dbReference type="ChEBI" id="CHEBI:58052"/>
    </ligand>
</feature>
<feature type="binding site" evidence="1">
    <location>
        <position position="492"/>
    </location>
    <ligand>
        <name>UDP-alpha-D-glucuronate</name>
        <dbReference type="ChEBI" id="CHEBI:58052"/>
    </ligand>
</feature>
<feature type="binding site" evidence="1">
    <location>
        <begin position="526"/>
        <end position="535"/>
    </location>
    <ligand>
        <name>UDP-alpha-D-glucuronate</name>
        <dbReference type="ChEBI" id="CHEBI:58052"/>
    </ligand>
</feature>
<feature type="binding site" evidence="1">
    <location>
        <position position="613"/>
    </location>
    <ligand>
        <name>UDP-alpha-D-glucuronate</name>
        <dbReference type="ChEBI" id="CHEBI:58052"/>
    </ligand>
</feature>
<feature type="site" description="Transition state stabilizer" evidence="1">
    <location>
        <position position="102"/>
    </location>
</feature>
<feature type="site" description="Raises pKa of active site His" evidence="1">
    <location>
        <position position="140"/>
    </location>
</feature>
<reference key="1">
    <citation type="journal article" date="2009" name="PLoS Genet.">
        <title>Organised genome dynamics in the Escherichia coli species results in highly diverse adaptive paths.</title>
        <authorList>
            <person name="Touchon M."/>
            <person name="Hoede C."/>
            <person name="Tenaillon O."/>
            <person name="Barbe V."/>
            <person name="Baeriswyl S."/>
            <person name="Bidet P."/>
            <person name="Bingen E."/>
            <person name="Bonacorsi S."/>
            <person name="Bouchier C."/>
            <person name="Bouvet O."/>
            <person name="Calteau A."/>
            <person name="Chiapello H."/>
            <person name="Clermont O."/>
            <person name="Cruveiller S."/>
            <person name="Danchin A."/>
            <person name="Diard M."/>
            <person name="Dossat C."/>
            <person name="Karoui M.E."/>
            <person name="Frapy E."/>
            <person name="Garry L."/>
            <person name="Ghigo J.M."/>
            <person name="Gilles A.M."/>
            <person name="Johnson J."/>
            <person name="Le Bouguenec C."/>
            <person name="Lescat M."/>
            <person name="Mangenot S."/>
            <person name="Martinez-Jehanne V."/>
            <person name="Matic I."/>
            <person name="Nassif X."/>
            <person name="Oztas S."/>
            <person name="Petit M.A."/>
            <person name="Pichon C."/>
            <person name="Rouy Z."/>
            <person name="Ruf C.S."/>
            <person name="Schneider D."/>
            <person name="Tourret J."/>
            <person name="Vacherie B."/>
            <person name="Vallenet D."/>
            <person name="Medigue C."/>
            <person name="Rocha E.P.C."/>
            <person name="Denamur E."/>
        </authorList>
    </citation>
    <scope>NUCLEOTIDE SEQUENCE [LARGE SCALE GENOMIC DNA]</scope>
    <source>
        <strain>UMN026 / ExPEC</strain>
    </source>
</reference>
<protein>
    <recommendedName>
        <fullName evidence="1">Bifunctional polymyxin resistance protein ArnA</fullName>
    </recommendedName>
    <domain>
        <recommendedName>
            <fullName evidence="1">UDP-4-amino-4-deoxy-L-arabinose formyltransferase</fullName>
            <ecNumber evidence="1">2.1.2.13</ecNumber>
        </recommendedName>
        <alternativeName>
            <fullName evidence="1">ArnAFT</fullName>
        </alternativeName>
        <alternativeName>
            <fullName evidence="1">UDP-L-Ara4N formyltransferase</fullName>
        </alternativeName>
    </domain>
    <domain>
        <recommendedName>
            <fullName evidence="1">UDP-glucuronic acid oxidase, UDP-4-keto-hexauronic acid decarboxylating</fullName>
            <ecNumber evidence="1">1.1.1.305</ecNumber>
        </recommendedName>
        <alternativeName>
            <fullName evidence="1">ArnADH</fullName>
        </alternativeName>
        <alternativeName>
            <fullName evidence="1">UDP-GlcUA decarboxylase</fullName>
        </alternativeName>
        <alternativeName>
            <fullName evidence="1">UDP-glucuronic acid dehydrogenase</fullName>
        </alternativeName>
    </domain>
</protein>
<sequence length="660" mass="74175">MKTVVFAYHDMGCLGIEALLAAGYEISAIFTHTDNPGEKAFYGSVARLAAERGIPVYAPDNVNHPLWVERIAQLSPEVIFSFYYRHLICDEILQLAPAGAFNLHGSLLPKYRGRAPLNWVLVNGETETGVTLHRMVKRADAGAIVAQLRIAIAPDDIAITLHHKLCHAARQLLEQTLPAIKHGNILEIAQRENEATCFGRRTPEDSFLEWHKPASVLHNMVRAVADPWPGAFSYVGNQKFTVWSSRVHSHAPAAQPGSVISVAPLLIACGDGALEIVTGQAGDGITMQGSQLAQTLGLVQGSRLNSQPACAARRRTRVLILGVNGFIGNHLTERLLREDHYEVYGLDIGSDAISRFLNHPHFHFVEGDISIHSEWIEYHVKKCDVVLPLVAIATPIEYTRNPLRVFELDFEENLRIIRYCVKYRKRIIFPSTSEVYGMCSDKYFDEDHSNLIVGPVNKPRWIYSVSKQLLDRVIWAYGEKEGLQFTLFRPFNWMGPRLDNLNAARIGSSRAITQLILNLVEGSPIKLIDGGKQKRCFTDIRDGIEALYRIIENAGNRCDGEIINIGNPDNEASIEELGEMLLASFEKHPLRHHFPPFAGFRVVESSSYYGKGYQDVEHRKPSIRNARRCLDWEPKIDMQETIDETLDFFLRTVDLTDKPS</sequence>
<gene>
    <name evidence="1" type="primary">arnA</name>
    <name type="ordered locus">ECUMN_2596</name>
</gene>
<organism>
    <name type="scientific">Escherichia coli O17:K52:H18 (strain UMN026 / ExPEC)</name>
    <dbReference type="NCBI Taxonomy" id="585056"/>
    <lineage>
        <taxon>Bacteria</taxon>
        <taxon>Pseudomonadati</taxon>
        <taxon>Pseudomonadota</taxon>
        <taxon>Gammaproteobacteria</taxon>
        <taxon>Enterobacterales</taxon>
        <taxon>Enterobacteriaceae</taxon>
        <taxon>Escherichia</taxon>
    </lineage>
</organism>
<comment type="function">
    <text evidence="1">Bifunctional enzyme that catalyzes the oxidative decarboxylation of UDP-glucuronic acid (UDP-GlcUA) to UDP-4-keto-arabinose (UDP-Ara4O) and the addition of a formyl group to UDP-4-amino-4-deoxy-L-arabinose (UDP-L-Ara4N) to form UDP-L-4-formamido-arabinose (UDP-L-Ara4FN). The modified arabinose is attached to lipid A and is required for resistance to polymyxin and cationic antimicrobial peptides.</text>
</comment>
<comment type="catalytic activity">
    <reaction evidence="1">
        <text>UDP-alpha-D-glucuronate + NAD(+) = UDP-beta-L-threo-pentopyranos-4-ulose + CO2 + NADH</text>
        <dbReference type="Rhea" id="RHEA:24702"/>
        <dbReference type="ChEBI" id="CHEBI:16526"/>
        <dbReference type="ChEBI" id="CHEBI:57540"/>
        <dbReference type="ChEBI" id="CHEBI:57945"/>
        <dbReference type="ChEBI" id="CHEBI:58052"/>
        <dbReference type="ChEBI" id="CHEBI:58710"/>
        <dbReference type="EC" id="1.1.1.305"/>
    </reaction>
</comment>
<comment type="catalytic activity">
    <reaction evidence="1">
        <text>UDP-4-amino-4-deoxy-beta-L-arabinose + (6R)-10-formyltetrahydrofolate = UDP-4-deoxy-4-formamido-beta-L-arabinose + (6S)-5,6,7,8-tetrahydrofolate + H(+)</text>
        <dbReference type="Rhea" id="RHEA:24706"/>
        <dbReference type="ChEBI" id="CHEBI:15378"/>
        <dbReference type="ChEBI" id="CHEBI:57453"/>
        <dbReference type="ChEBI" id="CHEBI:58708"/>
        <dbReference type="ChEBI" id="CHEBI:58709"/>
        <dbReference type="ChEBI" id="CHEBI:195366"/>
        <dbReference type="EC" id="2.1.2.13"/>
    </reaction>
</comment>
<comment type="pathway">
    <text evidence="1">Nucleotide-sugar biosynthesis; UDP-4-deoxy-4-formamido-beta-L-arabinose biosynthesis; UDP-4-deoxy-4-formamido-beta-L-arabinose from UDP-alpha-D-glucuronate: step 1/3.</text>
</comment>
<comment type="pathway">
    <text evidence="1">Nucleotide-sugar biosynthesis; UDP-4-deoxy-4-formamido-beta-L-arabinose biosynthesis; UDP-4-deoxy-4-formamido-beta-L-arabinose from UDP-alpha-D-glucuronate: step 3/3.</text>
</comment>
<comment type="pathway">
    <text evidence="1">Bacterial outer membrane biogenesis; lipopolysaccharide biosynthesis.</text>
</comment>
<comment type="subunit">
    <text evidence="1">Homohexamer, formed by a dimer of trimers.</text>
</comment>
<comment type="similarity">
    <text evidence="1">In the N-terminal section; belongs to the Fmt family. UDP-L-Ara4N formyltransferase subfamily.</text>
</comment>
<comment type="similarity">
    <text evidence="1">In the C-terminal section; belongs to the NAD(P)-dependent epimerase/dehydratase family. UDP-glucuronic acid decarboxylase subfamily.</text>
</comment>